<gene>
    <name type="primary">rimK</name>
    <name type="ordered locus">SYNW1384</name>
</gene>
<organism>
    <name type="scientific">Parasynechococcus marenigrum (strain WH8102)</name>
    <dbReference type="NCBI Taxonomy" id="84588"/>
    <lineage>
        <taxon>Bacteria</taxon>
        <taxon>Bacillati</taxon>
        <taxon>Cyanobacteriota</taxon>
        <taxon>Cyanophyceae</taxon>
        <taxon>Synechococcales</taxon>
        <taxon>Prochlorococcaceae</taxon>
        <taxon>Parasynechococcus</taxon>
        <taxon>Parasynechococcus marenigrum</taxon>
    </lineage>
</organism>
<dbReference type="EC" id="6.3.2.-"/>
<dbReference type="EMBL" id="BX569692">
    <property type="protein sequence ID" value="CAE07899.1"/>
    <property type="molecule type" value="Genomic_DNA"/>
</dbReference>
<dbReference type="SMR" id="Q7U6F4"/>
<dbReference type="STRING" id="84588.SYNW1384"/>
<dbReference type="KEGG" id="syw:SYNW1384"/>
<dbReference type="eggNOG" id="COG0189">
    <property type="taxonomic scope" value="Bacteria"/>
</dbReference>
<dbReference type="eggNOG" id="COG4067">
    <property type="taxonomic scope" value="Bacteria"/>
</dbReference>
<dbReference type="HOGENOM" id="CLU_045509_1_1_3"/>
<dbReference type="Proteomes" id="UP000001422">
    <property type="component" value="Chromosome"/>
</dbReference>
<dbReference type="GO" id="GO:0005737">
    <property type="term" value="C:cytoplasm"/>
    <property type="evidence" value="ECO:0007669"/>
    <property type="project" value="TreeGrafter"/>
</dbReference>
<dbReference type="GO" id="GO:0005524">
    <property type="term" value="F:ATP binding"/>
    <property type="evidence" value="ECO:0007669"/>
    <property type="project" value="UniProtKB-KW"/>
</dbReference>
<dbReference type="GO" id="GO:0046872">
    <property type="term" value="F:metal ion binding"/>
    <property type="evidence" value="ECO:0007669"/>
    <property type="project" value="UniProtKB-KW"/>
</dbReference>
<dbReference type="GO" id="GO:0018169">
    <property type="term" value="F:ribosomal S6-glutamic acid ligase activity"/>
    <property type="evidence" value="ECO:0007669"/>
    <property type="project" value="TreeGrafter"/>
</dbReference>
<dbReference type="GO" id="GO:0036211">
    <property type="term" value="P:protein modification process"/>
    <property type="evidence" value="ECO:0007669"/>
    <property type="project" value="InterPro"/>
</dbReference>
<dbReference type="GO" id="GO:0009432">
    <property type="term" value="P:SOS response"/>
    <property type="evidence" value="ECO:0007669"/>
    <property type="project" value="TreeGrafter"/>
</dbReference>
<dbReference type="GO" id="GO:0006412">
    <property type="term" value="P:translation"/>
    <property type="evidence" value="ECO:0007669"/>
    <property type="project" value="UniProtKB-KW"/>
</dbReference>
<dbReference type="FunFam" id="3.30.1490.20:FF:000005">
    <property type="entry name" value="Probable alpha-L-glutamate ligase 1"/>
    <property type="match status" value="1"/>
</dbReference>
<dbReference type="Gene3D" id="3.40.50.20">
    <property type="match status" value="1"/>
</dbReference>
<dbReference type="Gene3D" id="2.40.70.10">
    <property type="entry name" value="Acid Proteases"/>
    <property type="match status" value="1"/>
</dbReference>
<dbReference type="Gene3D" id="3.30.1490.20">
    <property type="entry name" value="ATP-grasp fold, A domain"/>
    <property type="match status" value="1"/>
</dbReference>
<dbReference type="Gene3D" id="3.30.470.20">
    <property type="entry name" value="ATP-grasp fold, B domain"/>
    <property type="match status" value="1"/>
</dbReference>
<dbReference type="InterPro" id="IPR011761">
    <property type="entry name" value="ATP-grasp"/>
</dbReference>
<dbReference type="InterPro" id="IPR013651">
    <property type="entry name" value="ATP-grasp_RimK-type"/>
</dbReference>
<dbReference type="InterPro" id="IPR013815">
    <property type="entry name" value="ATP_grasp_subdomain_1"/>
</dbReference>
<dbReference type="InterPro" id="IPR021109">
    <property type="entry name" value="Peptidase_aspartic_dom_sf"/>
</dbReference>
<dbReference type="InterPro" id="IPR008503">
    <property type="entry name" value="Put_Zn_protease"/>
</dbReference>
<dbReference type="InterPro" id="IPR041107">
    <property type="entry name" value="Rimk_N"/>
</dbReference>
<dbReference type="InterPro" id="IPR004666">
    <property type="entry name" value="Rp_bS6_RimK/Lys_biosynth_LsyX"/>
</dbReference>
<dbReference type="NCBIfam" id="NF007764">
    <property type="entry name" value="PRK10446.1"/>
    <property type="match status" value="1"/>
</dbReference>
<dbReference type="NCBIfam" id="TIGR00768">
    <property type="entry name" value="rimK_fam"/>
    <property type="match status" value="1"/>
</dbReference>
<dbReference type="PANTHER" id="PTHR21621:SF7">
    <property type="entry name" value="RIBOSOMAL PROTEIN BS6--L-GLUTAMATE LIGASE"/>
    <property type="match status" value="1"/>
</dbReference>
<dbReference type="PANTHER" id="PTHR21621">
    <property type="entry name" value="RIBOSOMAL PROTEIN S6 MODIFICATION PROTEIN"/>
    <property type="match status" value="1"/>
</dbReference>
<dbReference type="Pfam" id="PF08443">
    <property type="entry name" value="RimK"/>
    <property type="match status" value="1"/>
</dbReference>
<dbReference type="Pfam" id="PF18030">
    <property type="entry name" value="Rimk_N"/>
    <property type="match status" value="1"/>
</dbReference>
<dbReference type="Pfam" id="PF05618">
    <property type="entry name" value="Zn_protease"/>
    <property type="match status" value="1"/>
</dbReference>
<dbReference type="SUPFAM" id="SSF50630">
    <property type="entry name" value="Acid proteases"/>
    <property type="match status" value="1"/>
</dbReference>
<dbReference type="SUPFAM" id="SSF56059">
    <property type="entry name" value="Glutathione synthetase ATP-binding domain-like"/>
    <property type="match status" value="1"/>
</dbReference>
<dbReference type="PROSITE" id="PS50975">
    <property type="entry name" value="ATP_GRASP"/>
    <property type="match status" value="1"/>
</dbReference>
<proteinExistence type="inferred from homology"/>
<protein>
    <recommendedName>
        <fullName>Probable alpha-L-glutamate ligase</fullName>
        <ecNumber>6.3.2.-</ecNumber>
    </recommendedName>
</protein>
<reference key="1">
    <citation type="journal article" date="2003" name="Nature">
        <title>The genome of a motile marine Synechococcus.</title>
        <authorList>
            <person name="Palenik B."/>
            <person name="Brahamsha B."/>
            <person name="Larimer F.W."/>
            <person name="Land M.L."/>
            <person name="Hauser L."/>
            <person name="Chain P."/>
            <person name="Lamerdin J.E."/>
            <person name="Regala W."/>
            <person name="Allen E.E."/>
            <person name="McCarren J."/>
            <person name="Paulsen I.T."/>
            <person name="Dufresne A."/>
            <person name="Partensky F."/>
            <person name="Webb E.A."/>
            <person name="Waterbury J."/>
        </authorList>
    </citation>
    <scope>NUCLEOTIDE SEQUENCE [LARGE SCALE GENOMIC DNA]</scope>
    <source>
        <strain>WH8102</strain>
    </source>
</reference>
<evidence type="ECO:0000250" key="1"/>
<evidence type="ECO:0000255" key="2">
    <source>
        <dbReference type="PROSITE-ProRule" id="PRU00409"/>
    </source>
</evidence>
<evidence type="ECO:0000305" key="3"/>
<sequence length="466" mass="51437">MTRKIIVGSEEWCSLPGLGLPAIKARVDSGAATSSLHAFNIVPFQRDEARWISFEVHPLQNDRSVVIRRESPVLEQRGVRNTSGITETRYVIREQLVLGEESWPIELTLTNRDAMGYRMLLGREAMVGRVLVDPEGSHQLGDLRQDQLEAMYAPLRTERNGLRIALLASDPELYSNRRLLEAGEERGHRMEFLNVKQCYMRLDPQNPEMHYRGGNVLERINAVIPRIRPSVTFYGCAITRQFEAMGISVLNAAEPIKRSRDKLLASQLFVRHGLNMPVTGFASSPLDTKDLIKMVGGAPLILKLLEGAQGRGVVLAETQKAAESVINAMKSLNANLLVQEFIKEAGGKDLRCFVIGGKVVSAIERTAAVGDFRSNIHQGGSAQAVRIRPEERKLAVSATRALGLDVAGVDIIRSERGPLLLEVNSSPGLEGIETATGKDLAGLMIQEIERKLGWVRTRLSEPQVAC</sequence>
<feature type="chain" id="PRO_0000205486" description="Probable alpha-L-glutamate ligase">
    <location>
        <begin position="1"/>
        <end position="466"/>
    </location>
</feature>
<feature type="domain" description="ATP-grasp" evidence="2">
    <location>
        <begin position="266"/>
        <end position="449"/>
    </location>
</feature>
<feature type="region of interest" description="Unknown">
    <location>
        <begin position="1"/>
        <end position="161"/>
    </location>
</feature>
<feature type="region of interest" description="Alpha-L-glutamate ligase">
    <location>
        <begin position="162"/>
        <end position="466"/>
    </location>
</feature>
<feature type="binding site" evidence="1">
    <location>
        <position position="303"/>
    </location>
    <ligand>
        <name>ATP</name>
        <dbReference type="ChEBI" id="CHEBI:30616"/>
    </ligand>
</feature>
<feature type="binding site" evidence="2">
    <location>
        <begin position="340"/>
        <end position="341"/>
    </location>
    <ligand>
        <name>ATP</name>
        <dbReference type="ChEBI" id="CHEBI:30616"/>
    </ligand>
</feature>
<feature type="binding site" evidence="1">
    <location>
        <position position="349"/>
    </location>
    <ligand>
        <name>ATP</name>
        <dbReference type="ChEBI" id="CHEBI:30616"/>
    </ligand>
</feature>
<feature type="binding site" evidence="2">
    <location>
        <begin position="373"/>
        <end position="375"/>
    </location>
    <ligand>
        <name>ATP</name>
        <dbReference type="ChEBI" id="CHEBI:30616"/>
    </ligand>
</feature>
<feature type="binding site" evidence="2">
    <location>
        <position position="410"/>
    </location>
    <ligand>
        <name>Mg(2+)</name>
        <dbReference type="ChEBI" id="CHEBI:18420"/>
        <label>1</label>
    </ligand>
</feature>
<feature type="binding site" evidence="2">
    <location>
        <position position="410"/>
    </location>
    <ligand>
        <name>Mn(2+)</name>
        <dbReference type="ChEBI" id="CHEBI:29035"/>
        <label>1</label>
    </ligand>
</feature>
<feature type="binding site" evidence="2">
    <location>
        <position position="422"/>
    </location>
    <ligand>
        <name>Mg(2+)</name>
        <dbReference type="ChEBI" id="CHEBI:18420"/>
        <label>1</label>
    </ligand>
</feature>
<feature type="binding site" evidence="2">
    <location>
        <position position="422"/>
    </location>
    <ligand>
        <name>Mg(2+)</name>
        <dbReference type="ChEBI" id="CHEBI:18420"/>
        <label>2</label>
    </ligand>
</feature>
<feature type="binding site" evidence="2">
    <location>
        <position position="422"/>
    </location>
    <ligand>
        <name>Mn(2+)</name>
        <dbReference type="ChEBI" id="CHEBI:29035"/>
        <label>1</label>
    </ligand>
</feature>
<feature type="binding site" evidence="2">
    <location>
        <position position="422"/>
    </location>
    <ligand>
        <name>Mn(2+)</name>
        <dbReference type="ChEBI" id="CHEBI:29035"/>
        <label>2</label>
    </ligand>
</feature>
<feature type="binding site" evidence="2">
    <location>
        <position position="424"/>
    </location>
    <ligand>
        <name>Mg(2+)</name>
        <dbReference type="ChEBI" id="CHEBI:18420"/>
        <label>2</label>
    </ligand>
</feature>
<feature type="binding site" evidence="2">
    <location>
        <position position="424"/>
    </location>
    <ligand>
        <name>Mn(2+)</name>
        <dbReference type="ChEBI" id="CHEBI:29035"/>
        <label>2</label>
    </ligand>
</feature>
<accession>Q7U6F4</accession>
<keyword id="KW-0067">ATP-binding</keyword>
<keyword id="KW-0436">Ligase</keyword>
<keyword id="KW-0460">Magnesium</keyword>
<keyword id="KW-0464">Manganese</keyword>
<keyword id="KW-0479">Metal-binding</keyword>
<keyword id="KW-0547">Nucleotide-binding</keyword>
<keyword id="KW-0648">Protein biosynthesis</keyword>
<comment type="cofactor">
    <cofactor evidence="1">
        <name>Mg(2+)</name>
        <dbReference type="ChEBI" id="CHEBI:18420"/>
    </cofactor>
    <cofactor evidence="1">
        <name>Mn(2+)</name>
        <dbReference type="ChEBI" id="CHEBI:29035"/>
    </cofactor>
    <text evidence="1">Binds 2 magnesium or manganese ions per subunit.</text>
</comment>
<comment type="similarity">
    <text evidence="3">In the C-terminal section; belongs to the RimK family.</text>
</comment>
<name>RIMK_PARMW</name>